<gene>
    <name evidence="4" type="primary">UGT74-345-2</name>
</gene>
<feature type="chain" id="PRO_0000460920" description="Mogroside I-E synthase">
    <location>
        <begin position="1"/>
        <end position="460"/>
    </location>
</feature>
<feature type="active site" description="Proton acceptor" evidence="1">
    <location>
        <position position="25"/>
    </location>
</feature>
<feature type="active site" description="Charge relay" evidence="1">
    <location>
        <position position="114"/>
    </location>
</feature>
<feature type="binding site" evidence="2">
    <location>
        <position position="286"/>
    </location>
    <ligand>
        <name>UDP-alpha-D-glucose</name>
        <dbReference type="ChEBI" id="CHEBI:58885"/>
    </ligand>
</feature>
<feature type="binding site" evidence="2">
    <location>
        <position position="339"/>
    </location>
    <ligand>
        <name>UDP-alpha-D-glucose</name>
        <dbReference type="ChEBI" id="CHEBI:58885"/>
    </ligand>
</feature>
<feature type="binding site" evidence="2">
    <location>
        <position position="341"/>
    </location>
    <ligand>
        <name>UDP-alpha-D-glucose</name>
        <dbReference type="ChEBI" id="CHEBI:58885"/>
    </ligand>
</feature>
<feature type="binding site" evidence="2">
    <location>
        <position position="359"/>
    </location>
    <ligand>
        <name>UDP-alpha-D-glucose</name>
        <dbReference type="ChEBI" id="CHEBI:58885"/>
    </ligand>
</feature>
<feature type="binding site" evidence="2">
    <location>
        <position position="360"/>
    </location>
    <ligand>
        <name>UDP-alpha-D-glucose</name>
        <dbReference type="ChEBI" id="CHEBI:58885"/>
    </ligand>
</feature>
<feature type="binding site" evidence="2">
    <location>
        <position position="361"/>
    </location>
    <ligand>
        <name>UDP-alpha-D-glucose</name>
        <dbReference type="ChEBI" id="CHEBI:58885"/>
    </ligand>
</feature>
<feature type="binding site" evidence="2">
    <location>
        <position position="364"/>
    </location>
    <ligand>
        <name>UDP-alpha-D-glucose</name>
        <dbReference type="ChEBI" id="CHEBI:58885"/>
    </ligand>
</feature>
<feature type="binding site" evidence="2">
    <location>
        <position position="380"/>
    </location>
    <ligand>
        <name>UDP-alpha-D-glucose</name>
        <dbReference type="ChEBI" id="CHEBI:58885"/>
    </ligand>
</feature>
<feature type="binding site" evidence="2">
    <location>
        <position position="381"/>
    </location>
    <ligand>
        <name>UDP-alpha-D-glucose</name>
        <dbReference type="ChEBI" id="CHEBI:58885"/>
    </ligand>
</feature>
<protein>
    <recommendedName>
        <fullName evidence="5">Mogroside I-E synthase</fullName>
        <ecNumber evidence="3">2.4.1.350</ecNumber>
    </recommendedName>
    <alternativeName>
        <fullName evidence="5">Mogroside II-E synthase</fullName>
        <ecNumber evidence="3">2.4.1.-</ecNumber>
    </alternativeName>
    <alternativeName>
        <fullName evidence="5">Mogroside III synthase</fullName>
        <ecNumber evidence="3">2.4.1.-</ecNumber>
    </alternativeName>
    <alternativeName>
        <fullName evidence="5">Mogroside IIIx synthase</fullName>
        <ecNumber evidence="3">2.4.1.-</ecNumber>
    </alternativeName>
    <alternativeName>
        <fullName evidence="5">Siamenoside I synthase</fullName>
        <ecNumber evidence="3">2.4.1.-</ecNumber>
    </alternativeName>
    <alternativeName>
        <fullName evidence="4">UDP-glycosyltransferase 74-345-2</fullName>
        <shortName evidence="4">UGT74-345-2</shortName>
    </alternativeName>
</protein>
<name>GT742_SIRGR</name>
<sequence>MDETTVNGGRRASDVVVFAFPRHGHMSPMLQFSKRLVSKGLRVTFLITTSATESLRLNLPPSSSLDLQVISDVPESNDIATLEGYLRSFKATVSKTLADFIDGIGNPPKFIVYDSVMPWVQEVARGRGLDAAPFFTQSSAVNHILNHVYGGSLSIPAPENTAVSLPSMPVLQAEDLPAFPDDPEVVMNFMTSQFSNFQDAKWIFFNTFDQLECKKQSQVVNWMADRWPIKTVGPTIPSAYLDDGRLEDDRAFGLNLLKPEDGKNTRQWQWLDSKDTASVLYISFGSLAILQEEQVKELAYFLKDTNLSFLWVLRDSELQKLPHNFVQETSHRGLVVNWCSQLQVLSHRAVSCFVTHCGWNSTLEALSLGVPMVAIPQWVDQTTNAKFVADVWRVGVRVKKKDERIVTKEELEASIRQVVQGEGRNEFKHNAIKWKKLAKEAVDEGGSSDKNIEEFVKTIA</sequence>
<accession>P0DO74</accession>
<proteinExistence type="evidence at protein level"/>
<comment type="function">
    <text evidence="3">UDP-glycosyltransferase involved in the biosynthesis of cucurbitacin and mogroside tetracyclic triterpene natural products (e.g. siamenoside I and mogrosides IV, V and VI) (PubMed:27821754). Cucurbitacins have cytotoxic properties and exhibit deterrent taste as a defense barrier against herbivores (PubMed:27821754). Mogrosides are nonsugar highly oxygenated compounds used as high-intensity zero-calorie sweeteners; they also possess pharmacological properties such as regulating immunity, lowering blood sugar and lipid levels, protecting the liver, and acting as antioxidants and antitumor agents (PubMed:27821754). Catalyzes the C3 primary glucosylation of mogrol, mogroside I-A1, mogroside II-A1, mogroside II-A and mogroside III-A1 (PubMed:27821754).</text>
</comment>
<comment type="catalytic activity">
    <reaction evidence="3">
        <text>mogrol + UDP-alpha-D-glucose = mogroside IE + UDP + H(+)</text>
        <dbReference type="Rhea" id="RHEA:52044"/>
        <dbReference type="ChEBI" id="CHEBI:15378"/>
        <dbReference type="ChEBI" id="CHEBI:58223"/>
        <dbReference type="ChEBI" id="CHEBI:58885"/>
        <dbReference type="ChEBI" id="CHEBI:138974"/>
        <dbReference type="ChEBI" id="CHEBI:138975"/>
        <dbReference type="EC" id="2.4.1.350"/>
    </reaction>
    <physiologicalReaction direction="left-to-right" evidence="3">
        <dbReference type="Rhea" id="RHEA:52045"/>
    </physiologicalReaction>
</comment>
<comment type="catalytic activity">
    <reaction evidence="3">
        <text>mogroside I-A1 + UDP-alpha-D-glucose = mogroside IIE + UDP + H(+)</text>
        <dbReference type="Rhea" id="RHEA:80183"/>
        <dbReference type="ChEBI" id="CHEBI:15378"/>
        <dbReference type="ChEBI" id="CHEBI:58223"/>
        <dbReference type="ChEBI" id="CHEBI:58885"/>
        <dbReference type="ChEBI" id="CHEBI:145198"/>
        <dbReference type="ChEBI" id="CHEBI:229951"/>
    </reaction>
    <physiologicalReaction direction="left-to-right" evidence="3">
        <dbReference type="Rhea" id="RHEA:80184"/>
    </physiologicalReaction>
</comment>
<comment type="catalytic activity">
    <reaction evidence="3">
        <text>mogroside II-A1 + UDP-alpha-D-glucose = mogroside IIIX + UDP + H(+)</text>
        <dbReference type="Rhea" id="RHEA:81895"/>
        <dbReference type="ChEBI" id="CHEBI:15378"/>
        <dbReference type="ChEBI" id="CHEBI:58223"/>
        <dbReference type="ChEBI" id="CHEBI:58885"/>
        <dbReference type="ChEBI" id="CHEBI:229952"/>
        <dbReference type="ChEBI" id="CHEBI:232043"/>
    </reaction>
    <physiologicalReaction direction="left-to-right" evidence="3">
        <dbReference type="Rhea" id="RHEA:81896"/>
    </physiologicalReaction>
</comment>
<comment type="catalytic activity">
    <reaction evidence="3">
        <text>mogroside II-A + UDP-alpha-D-glucose = mogroside III + UDP + H(+)</text>
        <dbReference type="Rhea" id="RHEA:81899"/>
        <dbReference type="ChEBI" id="CHEBI:15378"/>
        <dbReference type="ChEBI" id="CHEBI:58223"/>
        <dbReference type="ChEBI" id="CHEBI:58885"/>
        <dbReference type="ChEBI" id="CHEBI:229960"/>
        <dbReference type="ChEBI" id="CHEBI:232044"/>
    </reaction>
    <physiologicalReaction direction="left-to-right" evidence="3">
        <dbReference type="Rhea" id="RHEA:81900"/>
    </physiologicalReaction>
</comment>
<comment type="catalytic activity">
    <reaction evidence="3">
        <text>mogroside III-A1 + UDP-alpha-D-glucose = siamenoside I + UDP + H(+)</text>
        <dbReference type="Rhea" id="RHEA:81903"/>
        <dbReference type="ChEBI" id="CHEBI:15378"/>
        <dbReference type="ChEBI" id="CHEBI:58223"/>
        <dbReference type="ChEBI" id="CHEBI:58885"/>
        <dbReference type="ChEBI" id="CHEBI:228908"/>
        <dbReference type="ChEBI" id="CHEBI:230511"/>
    </reaction>
    <physiologicalReaction direction="left-to-right" evidence="3">
        <dbReference type="Rhea" id="RHEA:81904"/>
    </physiologicalReaction>
</comment>
<comment type="pathway">
    <text evidence="3">Secondary metabolite biosynthesis; terpenoid biosynthesis.</text>
</comment>
<comment type="tissue specificity">
    <text evidence="3">Highly expressed in young fruits 15 days after anthesis (15-DAA).</text>
</comment>
<comment type="miscellaneous">
    <text evidence="6">Mogrosides, the major active constituents of S.grosvenorii fruits, are a mixture of cucurbitane-type triterpenoid glycosides that have been proven to be powerful and zero-caloric sweeteners and can hence be used as a sucrose substitute for diabetic and obese patients.</text>
</comment>
<comment type="similarity">
    <text evidence="5">Belongs to the UDP-glycosyltransferase family.</text>
</comment>
<reference key="1">
    <citation type="journal article" date="2016" name="Proc. Natl. Acad. Sci. U.S.A.">
        <title>The biosynthetic pathway of the nonsugar, high-intensity sweetener mogroside V from Siraitia grosvenorii.</title>
        <authorList>
            <person name="Itkin M."/>
            <person name="Davidovich-Rikanati R."/>
            <person name="Cohen S."/>
            <person name="Portnoy V."/>
            <person name="Doron-Faigenboim A."/>
            <person name="Oren E."/>
            <person name="Freilich S."/>
            <person name="Tzuri G."/>
            <person name="Baranes N."/>
            <person name="Shen S."/>
            <person name="Petreikov M."/>
            <person name="Sertchook R."/>
            <person name="Ben-Dor S."/>
            <person name="Gottlieb H."/>
            <person name="Hernandez A."/>
            <person name="Nelson D.R."/>
            <person name="Paris H.S."/>
            <person name="Tadmor Y."/>
            <person name="Burger Y."/>
            <person name="Lewinsohn E."/>
            <person name="Katzir N."/>
            <person name="Schaffer A."/>
        </authorList>
    </citation>
    <scope>NUCLEOTIDE SEQUENCE</scope>
    <scope>FUNCTION</scope>
    <scope>CATALYTIC ACTIVITY</scope>
    <scope>PATHWAY</scope>
    <scope>TISSUE SPECIFICITY</scope>
    <scope>GENE FAMILY</scope>
    <scope>NOMENCLATURE</scope>
</reference>
<keyword id="KW-0808">Transferase</keyword>
<evidence type="ECO:0000250" key="1">
    <source>
        <dbReference type="UniProtKB" id="A0A0A1HA03"/>
    </source>
</evidence>
<evidence type="ECO:0000250" key="2">
    <source>
        <dbReference type="UniProtKB" id="K7NBW3"/>
    </source>
</evidence>
<evidence type="ECO:0000269" key="3">
    <source>
    </source>
</evidence>
<evidence type="ECO:0000303" key="4">
    <source>
    </source>
</evidence>
<evidence type="ECO:0000305" key="5"/>
<evidence type="ECO:0000305" key="6">
    <source>
    </source>
</evidence>
<dbReference type="EC" id="2.4.1.350" evidence="3"/>
<dbReference type="EC" id="2.4.1.-" evidence="3"/>
<dbReference type="SMR" id="P0DO74"/>
<dbReference type="UniPathway" id="UPA00213"/>
<dbReference type="GO" id="GO:0080043">
    <property type="term" value="F:quercetin 3-O-glucosyltransferase activity"/>
    <property type="evidence" value="ECO:0007669"/>
    <property type="project" value="TreeGrafter"/>
</dbReference>
<dbReference type="GO" id="GO:0080044">
    <property type="term" value="F:quercetin 7-O-glucosyltransferase activity"/>
    <property type="evidence" value="ECO:0007669"/>
    <property type="project" value="TreeGrafter"/>
</dbReference>
<dbReference type="CDD" id="cd03784">
    <property type="entry name" value="GT1_Gtf-like"/>
    <property type="match status" value="1"/>
</dbReference>
<dbReference type="FunFam" id="3.40.50.2000:FF:000019">
    <property type="entry name" value="Glycosyltransferase"/>
    <property type="match status" value="1"/>
</dbReference>
<dbReference type="Gene3D" id="3.40.50.2000">
    <property type="entry name" value="Glycogen Phosphorylase B"/>
    <property type="match status" value="2"/>
</dbReference>
<dbReference type="InterPro" id="IPR002213">
    <property type="entry name" value="UDP_glucos_trans"/>
</dbReference>
<dbReference type="InterPro" id="IPR035595">
    <property type="entry name" value="UDP_glycos_trans_CS"/>
</dbReference>
<dbReference type="PANTHER" id="PTHR11926">
    <property type="entry name" value="GLUCOSYL/GLUCURONOSYL TRANSFERASES"/>
    <property type="match status" value="1"/>
</dbReference>
<dbReference type="PANTHER" id="PTHR11926:SF1560">
    <property type="entry name" value="UDP-GLYCOSYLTRANSFERASE 74E1-RELATED"/>
    <property type="match status" value="1"/>
</dbReference>
<dbReference type="Pfam" id="PF00201">
    <property type="entry name" value="UDPGT"/>
    <property type="match status" value="1"/>
</dbReference>
<dbReference type="SUPFAM" id="SSF53756">
    <property type="entry name" value="UDP-Glycosyltransferase/glycogen phosphorylase"/>
    <property type="match status" value="1"/>
</dbReference>
<organism>
    <name type="scientific">Siraitia grosvenorii</name>
    <name type="common">Monk's fruit</name>
    <name type="synonym">Luo han guo</name>
    <dbReference type="NCBI Taxonomy" id="190515"/>
    <lineage>
        <taxon>Eukaryota</taxon>
        <taxon>Viridiplantae</taxon>
        <taxon>Streptophyta</taxon>
        <taxon>Embryophyta</taxon>
        <taxon>Tracheophyta</taxon>
        <taxon>Spermatophyta</taxon>
        <taxon>Magnoliopsida</taxon>
        <taxon>eudicotyledons</taxon>
        <taxon>Gunneridae</taxon>
        <taxon>Pentapetalae</taxon>
        <taxon>rosids</taxon>
        <taxon>fabids</taxon>
        <taxon>Cucurbitales</taxon>
        <taxon>Cucurbitaceae</taxon>
        <taxon>Siraitieae</taxon>
        <taxon>Siraitia</taxon>
    </lineage>
</organism>